<feature type="chain" id="PRO_0000067819" description="DNA-directed RNA polymerase subunit beta'">
    <location>
        <begin position="1"/>
        <end position="1524"/>
    </location>
</feature>
<feature type="region of interest" description="Disordered" evidence="2">
    <location>
        <begin position="1501"/>
        <end position="1524"/>
    </location>
</feature>
<feature type="binding site" evidence="1">
    <location>
        <position position="58"/>
    </location>
    <ligand>
        <name>Zn(2+)</name>
        <dbReference type="ChEBI" id="CHEBI:29105"/>
        <label>1</label>
    </ligand>
</feature>
<feature type="binding site" evidence="1">
    <location>
        <position position="60"/>
    </location>
    <ligand>
        <name>Zn(2+)</name>
        <dbReference type="ChEBI" id="CHEBI:29105"/>
        <label>1</label>
    </ligand>
</feature>
<feature type="binding site" evidence="1">
    <location>
        <position position="73"/>
    </location>
    <ligand>
        <name>Zn(2+)</name>
        <dbReference type="ChEBI" id="CHEBI:29105"/>
        <label>1</label>
    </ligand>
</feature>
<feature type="binding site" evidence="1">
    <location>
        <position position="76"/>
    </location>
    <ligand>
        <name>Zn(2+)</name>
        <dbReference type="ChEBI" id="CHEBI:29105"/>
        <label>1</label>
    </ligand>
</feature>
<feature type="binding site" evidence="1">
    <location>
        <position position="739"/>
    </location>
    <ligand>
        <name>Mg(2+)</name>
        <dbReference type="ChEBI" id="CHEBI:18420"/>
    </ligand>
</feature>
<feature type="binding site" evidence="1">
    <location>
        <position position="741"/>
    </location>
    <ligand>
        <name>Mg(2+)</name>
        <dbReference type="ChEBI" id="CHEBI:18420"/>
    </ligand>
</feature>
<feature type="binding site" evidence="1">
    <location>
        <position position="743"/>
    </location>
    <ligand>
        <name>Mg(2+)</name>
        <dbReference type="ChEBI" id="CHEBI:18420"/>
    </ligand>
</feature>
<feature type="binding site" evidence="1">
    <location>
        <position position="1112"/>
    </location>
    <ligand>
        <name>Zn(2+)</name>
        <dbReference type="ChEBI" id="CHEBI:29105"/>
        <label>2</label>
    </ligand>
</feature>
<feature type="binding site" evidence="1">
    <location>
        <position position="1194"/>
    </location>
    <ligand>
        <name>Zn(2+)</name>
        <dbReference type="ChEBI" id="CHEBI:29105"/>
        <label>2</label>
    </ligand>
</feature>
<feature type="binding site" evidence="1">
    <location>
        <position position="1201"/>
    </location>
    <ligand>
        <name>Zn(2+)</name>
        <dbReference type="ChEBI" id="CHEBI:29105"/>
        <label>2</label>
    </ligand>
</feature>
<feature type="binding site" evidence="1">
    <location>
        <position position="1204"/>
    </location>
    <ligand>
        <name>Zn(2+)</name>
        <dbReference type="ChEBI" id="CHEBI:29105"/>
        <label>2</label>
    </ligand>
</feature>
<comment type="function">
    <text evidence="1">DNA-dependent RNA polymerase catalyzes the transcription of DNA into RNA using the four ribonucleoside triphosphates as substrates.</text>
</comment>
<comment type="catalytic activity">
    <reaction evidence="1">
        <text>RNA(n) + a ribonucleoside 5'-triphosphate = RNA(n+1) + diphosphate</text>
        <dbReference type="Rhea" id="RHEA:21248"/>
        <dbReference type="Rhea" id="RHEA-COMP:14527"/>
        <dbReference type="Rhea" id="RHEA-COMP:17342"/>
        <dbReference type="ChEBI" id="CHEBI:33019"/>
        <dbReference type="ChEBI" id="CHEBI:61557"/>
        <dbReference type="ChEBI" id="CHEBI:140395"/>
        <dbReference type="EC" id="2.7.7.6"/>
    </reaction>
</comment>
<comment type="cofactor">
    <cofactor evidence="1">
        <name>Mg(2+)</name>
        <dbReference type="ChEBI" id="CHEBI:18420"/>
    </cofactor>
    <text evidence="1">Binds 1 Mg(2+) ion per subunit.</text>
</comment>
<comment type="cofactor">
    <cofactor evidence="1">
        <name>Zn(2+)</name>
        <dbReference type="ChEBI" id="CHEBI:29105"/>
    </cofactor>
    <text evidence="1">Binds 2 Zn(2+) ions per subunit.</text>
</comment>
<comment type="subunit">
    <text evidence="1">The RNAP catalytic core consists of 2 alpha, 1 beta, 1 beta' and 1 omega subunit. When a sigma factor is associated with the core the holoenzyme is formed, which can initiate transcription.</text>
</comment>
<comment type="similarity">
    <text evidence="1">Belongs to the RNA polymerase beta' chain family.</text>
</comment>
<comment type="sequence caution" evidence="3">
    <conflict type="erroneous initiation">
        <sequence resource="EMBL-CDS" id="AAS81802"/>
    </conflict>
    <text>Truncated N-terminus.</text>
</comment>
<evidence type="ECO:0000255" key="1">
    <source>
        <dbReference type="HAMAP-Rule" id="MF_01322"/>
    </source>
</evidence>
<evidence type="ECO:0000256" key="2">
    <source>
        <dbReference type="SAM" id="MobiDB-lite"/>
    </source>
</evidence>
<evidence type="ECO:0000305" key="3"/>
<accession>Q72HM6</accession>
<sequence>MKKEVRKVRIALASPEKIRSWSYGEVEKPETINYRTLKPERDGLFDERIFGPIKDYECACGKYKRQRFEGKVCERCGVEVTKSIVRRYRMGHIELATPAAHIWFVKDVPSKIGTLLDLSATELEQVLYFSKYIVLDPKGAILNGVPVEKRQLLTDEEYRELRYGKQETYPLPPGVDALVKDGEEVVKGQELAPGVVSRLDGVALYRFPRRVRVEYVKKERAGLRLPLAAWVEKEAYKPGEILAELPEPYLFRAEEEGVVELKELEEGAFLVLRQEDEPVATYFLPVGMTPLVVHGEIVEKGQPLAEAKGLLRMPRQVRAAQVEAEEEGETVYLTLFLEWTEPKDYRVQPHMNVVVPEGARVEAGDKIVAAIDPEEEVIAEAEGVVHLHEPASILVVKARVYPFEDDVEVSTGDRVAPGDVLADGGKVKSDVYGRVEVDLVRNVVRVVESYDIDARMGAEAIQQLLKELDLEALEKELLEEMKHPSRARRAKARKRLEVVRAFLDSGNRPEWMILEAVPVLPPDLRPMVQVDGGRFATSDLNDLYRRLINRNNRLKKLLAQGAPEIIIRNEKRMLQEAVDALLDNGRRGAPVTNPGSDRPLRSLTDILSGKQGRFRQNLLGKRVDYSGRSVIVVGPQLKLHQCGLPKRMALELFKPFLLKKMEEKGIAPNVKAARRMLERQRDIKDEVWDALEEVIHGKVVLLNRAPTLHRLGIQAFQPVLVEGQSIQLHPLVCEAFNADFDGDQMAVHVPLSSFAQAEARIQMLSAHNLLSPASGEPLAKPSRDIILGLYYITQVRKEKKGAGLEFATPEEALAAHERGEVALNAPIKVAGRETSVGRLKYVFANPDEALLAVAHGIVDLQDVVTVRYMGKRLETSPGRILFARIVAEAVEDEKVAWELIQLDVPQEKNSLKDLVYQAFLRLGMEKTARLLDALKYYGFTFSTTSGITIGIDDAVIPEEKKQYLEEADRKLLQIEQAYEMGFLTDRERYDQILQLWTETTEKVTQAVFKNFEENYPFNPLYVMAQSGARGNPQQIRQLCGMRGLMQKPSGETFEVPVRSSFREGLTVLEYFISSHGARKGGADTALRTADSGYLTRKLVDVTHEIVVREADCGTTNYISVPLFQPDEVTRSLRLRKRADIEAGLYGRVLAREVEVLGVRLEEGRYLSMDDVHLLIKAAEAGEIQEVPVRSPLTCQTRYGVCQKCYGYDLSMARPVSIGEAVGIVAAQSIGEPGTQLTMRTFHTGGVAGAADITQGLPRVIELFEARRPKAKAVISEIDGVVRIEETEEKLSVFVESEGFSKEYKLPKEARLLAKDGDYVEAGQPLTRGAIDPHQLLEAKGPEAVERYLVEEIQKVYRAQGVKLHDKHIEIVVRQMMKYVEVTDPGDSRLLEGQVLEKWDVEALNERLIAEGKTPVAWKPLLMGVTKSALSTKSWLSAASFQNTTHVLTEAAIAGKKDELIGLKENVILGRLIPAGTGSDFVRFTQVVDQKTLKAIEEARKEAVEAKERPAARRGVKREQPGKQA</sequence>
<proteinExistence type="inferred from homology"/>
<organism>
    <name type="scientific">Thermus thermophilus (strain ATCC BAA-163 / DSM 7039 / HB27)</name>
    <dbReference type="NCBI Taxonomy" id="262724"/>
    <lineage>
        <taxon>Bacteria</taxon>
        <taxon>Thermotogati</taxon>
        <taxon>Deinococcota</taxon>
        <taxon>Deinococci</taxon>
        <taxon>Thermales</taxon>
        <taxon>Thermaceae</taxon>
        <taxon>Thermus</taxon>
    </lineage>
</organism>
<keyword id="KW-0240">DNA-directed RNA polymerase</keyword>
<keyword id="KW-0460">Magnesium</keyword>
<keyword id="KW-0479">Metal-binding</keyword>
<keyword id="KW-0548">Nucleotidyltransferase</keyword>
<keyword id="KW-0804">Transcription</keyword>
<keyword id="KW-0808">Transferase</keyword>
<keyword id="KW-0862">Zinc</keyword>
<dbReference type="EC" id="2.7.7.6" evidence="1"/>
<dbReference type="EMBL" id="AE017221">
    <property type="protein sequence ID" value="AAS81802.1"/>
    <property type="status" value="ALT_INIT"/>
    <property type="molecule type" value="Genomic_DNA"/>
</dbReference>
<dbReference type="RefSeq" id="WP_041443578.1">
    <property type="nucleotide sequence ID" value="NC_005835.1"/>
</dbReference>
<dbReference type="SMR" id="Q72HM6"/>
<dbReference type="KEGG" id="tth:TT_C1460"/>
<dbReference type="eggNOG" id="COG0086">
    <property type="taxonomic scope" value="Bacteria"/>
</dbReference>
<dbReference type="HOGENOM" id="CLU_000524_3_1_0"/>
<dbReference type="OrthoDB" id="9815296at2"/>
<dbReference type="Proteomes" id="UP000000592">
    <property type="component" value="Chromosome"/>
</dbReference>
<dbReference type="GO" id="GO:0000428">
    <property type="term" value="C:DNA-directed RNA polymerase complex"/>
    <property type="evidence" value="ECO:0007669"/>
    <property type="project" value="UniProtKB-KW"/>
</dbReference>
<dbReference type="GO" id="GO:0003677">
    <property type="term" value="F:DNA binding"/>
    <property type="evidence" value="ECO:0007669"/>
    <property type="project" value="UniProtKB-UniRule"/>
</dbReference>
<dbReference type="GO" id="GO:0003899">
    <property type="term" value="F:DNA-directed RNA polymerase activity"/>
    <property type="evidence" value="ECO:0007669"/>
    <property type="project" value="UniProtKB-UniRule"/>
</dbReference>
<dbReference type="GO" id="GO:0000287">
    <property type="term" value="F:magnesium ion binding"/>
    <property type="evidence" value="ECO:0007669"/>
    <property type="project" value="UniProtKB-UniRule"/>
</dbReference>
<dbReference type="GO" id="GO:0008270">
    <property type="term" value="F:zinc ion binding"/>
    <property type="evidence" value="ECO:0007669"/>
    <property type="project" value="UniProtKB-UniRule"/>
</dbReference>
<dbReference type="GO" id="GO:0006351">
    <property type="term" value="P:DNA-templated transcription"/>
    <property type="evidence" value="ECO:0007669"/>
    <property type="project" value="UniProtKB-UniRule"/>
</dbReference>
<dbReference type="CDD" id="cd02655">
    <property type="entry name" value="RNAP_beta'_C"/>
    <property type="match status" value="1"/>
</dbReference>
<dbReference type="CDD" id="cd01609">
    <property type="entry name" value="RNAP_beta'_N"/>
    <property type="match status" value="1"/>
</dbReference>
<dbReference type="Gene3D" id="1.10.132.30">
    <property type="match status" value="1"/>
</dbReference>
<dbReference type="Gene3D" id="1.10.150.390">
    <property type="match status" value="1"/>
</dbReference>
<dbReference type="Gene3D" id="1.10.1790.20">
    <property type="match status" value="1"/>
</dbReference>
<dbReference type="Gene3D" id="1.10.40.90">
    <property type="match status" value="1"/>
</dbReference>
<dbReference type="Gene3D" id="2.40.40.20">
    <property type="match status" value="1"/>
</dbReference>
<dbReference type="Gene3D" id="2.40.50.100">
    <property type="match status" value="4"/>
</dbReference>
<dbReference type="Gene3D" id="6.10.250.1410">
    <property type="match status" value="1"/>
</dbReference>
<dbReference type="Gene3D" id="3.90.105.10">
    <property type="entry name" value="Molybdopterin biosynthesis moea protein, domain 2"/>
    <property type="match status" value="1"/>
</dbReference>
<dbReference type="Gene3D" id="4.10.860.120">
    <property type="entry name" value="RNA polymerase II, clamp domain"/>
    <property type="match status" value="1"/>
</dbReference>
<dbReference type="Gene3D" id="1.10.274.100">
    <property type="entry name" value="RNA polymerase Rpb1, domain 3"/>
    <property type="match status" value="1"/>
</dbReference>
<dbReference type="HAMAP" id="MF_01322">
    <property type="entry name" value="RNApol_bact_RpoC"/>
    <property type="match status" value="1"/>
</dbReference>
<dbReference type="InterPro" id="IPR045867">
    <property type="entry name" value="DNA-dir_RpoC_beta_prime"/>
</dbReference>
<dbReference type="InterPro" id="IPR012754">
    <property type="entry name" value="DNA-dir_RpoC_beta_prime_bact"/>
</dbReference>
<dbReference type="InterPro" id="IPR000722">
    <property type="entry name" value="RNA_pol_asu"/>
</dbReference>
<dbReference type="InterPro" id="IPR006592">
    <property type="entry name" value="RNA_pol_N"/>
</dbReference>
<dbReference type="InterPro" id="IPR007080">
    <property type="entry name" value="RNA_pol_Rpb1_1"/>
</dbReference>
<dbReference type="InterPro" id="IPR007066">
    <property type="entry name" value="RNA_pol_Rpb1_3"/>
</dbReference>
<dbReference type="InterPro" id="IPR042102">
    <property type="entry name" value="RNA_pol_Rpb1_3_sf"/>
</dbReference>
<dbReference type="InterPro" id="IPR007083">
    <property type="entry name" value="RNA_pol_Rpb1_4"/>
</dbReference>
<dbReference type="InterPro" id="IPR007081">
    <property type="entry name" value="RNA_pol_Rpb1_5"/>
</dbReference>
<dbReference type="InterPro" id="IPR044893">
    <property type="entry name" value="RNA_pol_Rpb1_clamp_domain"/>
</dbReference>
<dbReference type="InterPro" id="IPR038120">
    <property type="entry name" value="Rpb1_funnel_sf"/>
</dbReference>
<dbReference type="InterPro" id="IPR048566">
    <property type="entry name" value="RpoC_hybrid"/>
</dbReference>
<dbReference type="PANTHER" id="PTHR19376">
    <property type="entry name" value="DNA-DIRECTED RNA POLYMERASE"/>
    <property type="match status" value="1"/>
</dbReference>
<dbReference type="PANTHER" id="PTHR19376:SF54">
    <property type="entry name" value="DNA-DIRECTED RNA POLYMERASE SUBUNIT BETA"/>
    <property type="match status" value="1"/>
</dbReference>
<dbReference type="Pfam" id="PF04997">
    <property type="entry name" value="RNA_pol_Rpb1_1"/>
    <property type="match status" value="2"/>
</dbReference>
<dbReference type="Pfam" id="PF00623">
    <property type="entry name" value="RNA_pol_Rpb1_2"/>
    <property type="match status" value="1"/>
</dbReference>
<dbReference type="Pfam" id="PF04983">
    <property type="entry name" value="RNA_pol_Rpb1_3"/>
    <property type="match status" value="1"/>
</dbReference>
<dbReference type="Pfam" id="PF05000">
    <property type="entry name" value="RNA_pol_Rpb1_4"/>
    <property type="match status" value="1"/>
</dbReference>
<dbReference type="Pfam" id="PF04998">
    <property type="entry name" value="RNA_pol_Rpb1_5"/>
    <property type="match status" value="1"/>
</dbReference>
<dbReference type="Pfam" id="PF21668">
    <property type="entry name" value="RPOC_hybrid"/>
    <property type="match status" value="1"/>
</dbReference>
<dbReference type="SMART" id="SM00663">
    <property type="entry name" value="RPOLA_N"/>
    <property type="match status" value="1"/>
</dbReference>
<dbReference type="SUPFAM" id="SSF64484">
    <property type="entry name" value="beta and beta-prime subunits of DNA dependent RNA-polymerase"/>
    <property type="match status" value="1"/>
</dbReference>
<name>RPOC_THET2</name>
<gene>
    <name evidence="1" type="primary">rpoC</name>
    <name type="ordered locus">TT_C1460</name>
</gene>
<reference key="1">
    <citation type="journal article" date="2004" name="Nat. Biotechnol.">
        <title>The genome sequence of the extreme thermophile Thermus thermophilus.</title>
        <authorList>
            <person name="Henne A."/>
            <person name="Brueggemann H."/>
            <person name="Raasch C."/>
            <person name="Wiezer A."/>
            <person name="Hartsch T."/>
            <person name="Liesegang H."/>
            <person name="Johann A."/>
            <person name="Lienard T."/>
            <person name="Gohl O."/>
            <person name="Martinez-Arias R."/>
            <person name="Jacobi C."/>
            <person name="Starkuviene V."/>
            <person name="Schlenczeck S."/>
            <person name="Dencker S."/>
            <person name="Huber R."/>
            <person name="Klenk H.-P."/>
            <person name="Kramer W."/>
            <person name="Merkl R."/>
            <person name="Gottschalk G."/>
            <person name="Fritz H.-J."/>
        </authorList>
    </citation>
    <scope>NUCLEOTIDE SEQUENCE [LARGE SCALE GENOMIC DNA]</scope>
    <source>
        <strain>ATCC BAA-163 / DSM 7039 / HB27</strain>
    </source>
</reference>
<protein>
    <recommendedName>
        <fullName evidence="1">DNA-directed RNA polymerase subunit beta'</fullName>
        <shortName evidence="1">RNAP subunit beta'</shortName>
        <ecNumber evidence="1">2.7.7.6</ecNumber>
    </recommendedName>
    <alternativeName>
        <fullName evidence="1">RNA polymerase subunit beta'</fullName>
    </alternativeName>
    <alternativeName>
        <fullName evidence="1">Transcriptase subunit beta'</fullName>
    </alternativeName>
</protein>